<comment type="function">
    <text evidence="1">Plays an important role in the de novo pathway of purine nucleotide biosynthesis. Catalyzes the first committed step in the biosynthesis of AMP from IMP.</text>
</comment>
<comment type="catalytic activity">
    <reaction evidence="1">
        <text>IMP + L-aspartate + GTP = N(6)-(1,2-dicarboxyethyl)-AMP + GDP + phosphate + 2 H(+)</text>
        <dbReference type="Rhea" id="RHEA:15753"/>
        <dbReference type="ChEBI" id="CHEBI:15378"/>
        <dbReference type="ChEBI" id="CHEBI:29991"/>
        <dbReference type="ChEBI" id="CHEBI:37565"/>
        <dbReference type="ChEBI" id="CHEBI:43474"/>
        <dbReference type="ChEBI" id="CHEBI:57567"/>
        <dbReference type="ChEBI" id="CHEBI:58053"/>
        <dbReference type="ChEBI" id="CHEBI:58189"/>
        <dbReference type="EC" id="6.3.4.4"/>
    </reaction>
</comment>
<comment type="cofactor">
    <cofactor evidence="1">
        <name>Mg(2+)</name>
        <dbReference type="ChEBI" id="CHEBI:18420"/>
    </cofactor>
    <text evidence="1">Binds 1 Mg(2+) ion per subunit.</text>
</comment>
<comment type="pathway">
    <text evidence="1">Purine metabolism; AMP biosynthesis via de novo pathway; AMP from IMP: step 1/2.</text>
</comment>
<comment type="subunit">
    <text evidence="1">Homodimer.</text>
</comment>
<comment type="subcellular location">
    <subcellularLocation>
        <location evidence="1">Cytoplasm</location>
    </subcellularLocation>
</comment>
<comment type="similarity">
    <text evidence="1">Belongs to the adenylosuccinate synthetase family.</text>
</comment>
<protein>
    <recommendedName>
        <fullName evidence="1">Adenylosuccinate synthetase</fullName>
        <shortName evidence="1">AMPSase</shortName>
        <shortName evidence="1">AdSS</shortName>
        <ecNumber evidence="1">6.3.4.4</ecNumber>
    </recommendedName>
    <alternativeName>
        <fullName evidence="1">IMP--aspartate ligase</fullName>
    </alternativeName>
</protein>
<dbReference type="EC" id="6.3.4.4" evidence="1"/>
<dbReference type="EMBL" id="CP001341">
    <property type="protein sequence ID" value="ACL38664.1"/>
    <property type="molecule type" value="Genomic_DNA"/>
</dbReference>
<dbReference type="RefSeq" id="WP_015935889.1">
    <property type="nucleotide sequence ID" value="NC_011886.1"/>
</dbReference>
<dbReference type="SMR" id="B8HBV4"/>
<dbReference type="STRING" id="452863.Achl_0667"/>
<dbReference type="KEGG" id="ach:Achl_0667"/>
<dbReference type="eggNOG" id="COG0104">
    <property type="taxonomic scope" value="Bacteria"/>
</dbReference>
<dbReference type="HOGENOM" id="CLU_029848_0_0_11"/>
<dbReference type="OrthoDB" id="9807553at2"/>
<dbReference type="UniPathway" id="UPA00075">
    <property type="reaction ID" value="UER00335"/>
</dbReference>
<dbReference type="Proteomes" id="UP000002505">
    <property type="component" value="Chromosome"/>
</dbReference>
<dbReference type="GO" id="GO:0005737">
    <property type="term" value="C:cytoplasm"/>
    <property type="evidence" value="ECO:0007669"/>
    <property type="project" value="UniProtKB-SubCell"/>
</dbReference>
<dbReference type="GO" id="GO:0004019">
    <property type="term" value="F:adenylosuccinate synthase activity"/>
    <property type="evidence" value="ECO:0007669"/>
    <property type="project" value="UniProtKB-UniRule"/>
</dbReference>
<dbReference type="GO" id="GO:0005525">
    <property type="term" value="F:GTP binding"/>
    <property type="evidence" value="ECO:0007669"/>
    <property type="project" value="UniProtKB-UniRule"/>
</dbReference>
<dbReference type="GO" id="GO:0000287">
    <property type="term" value="F:magnesium ion binding"/>
    <property type="evidence" value="ECO:0007669"/>
    <property type="project" value="UniProtKB-UniRule"/>
</dbReference>
<dbReference type="GO" id="GO:0044208">
    <property type="term" value="P:'de novo' AMP biosynthetic process"/>
    <property type="evidence" value="ECO:0007669"/>
    <property type="project" value="UniProtKB-UniRule"/>
</dbReference>
<dbReference type="GO" id="GO:0046040">
    <property type="term" value="P:IMP metabolic process"/>
    <property type="evidence" value="ECO:0007669"/>
    <property type="project" value="TreeGrafter"/>
</dbReference>
<dbReference type="CDD" id="cd03108">
    <property type="entry name" value="AdSS"/>
    <property type="match status" value="1"/>
</dbReference>
<dbReference type="FunFam" id="1.10.300.10:FF:000001">
    <property type="entry name" value="Adenylosuccinate synthetase"/>
    <property type="match status" value="1"/>
</dbReference>
<dbReference type="FunFam" id="3.90.170.10:FF:000001">
    <property type="entry name" value="Adenylosuccinate synthetase"/>
    <property type="match status" value="1"/>
</dbReference>
<dbReference type="Gene3D" id="3.40.440.10">
    <property type="entry name" value="Adenylosuccinate Synthetase, subunit A, domain 1"/>
    <property type="match status" value="1"/>
</dbReference>
<dbReference type="Gene3D" id="1.10.300.10">
    <property type="entry name" value="Adenylosuccinate Synthetase, subunit A, domain 2"/>
    <property type="match status" value="1"/>
</dbReference>
<dbReference type="Gene3D" id="3.90.170.10">
    <property type="entry name" value="Adenylosuccinate Synthetase, subunit A, domain 3"/>
    <property type="match status" value="1"/>
</dbReference>
<dbReference type="HAMAP" id="MF_00011">
    <property type="entry name" value="Adenylosucc_synth"/>
    <property type="match status" value="1"/>
</dbReference>
<dbReference type="InterPro" id="IPR018220">
    <property type="entry name" value="Adenylosuccin_syn_GTP-bd"/>
</dbReference>
<dbReference type="InterPro" id="IPR033128">
    <property type="entry name" value="Adenylosuccin_syn_Lys_AS"/>
</dbReference>
<dbReference type="InterPro" id="IPR042109">
    <property type="entry name" value="Adenylosuccinate_synth_dom1"/>
</dbReference>
<dbReference type="InterPro" id="IPR042110">
    <property type="entry name" value="Adenylosuccinate_synth_dom2"/>
</dbReference>
<dbReference type="InterPro" id="IPR042111">
    <property type="entry name" value="Adenylosuccinate_synth_dom3"/>
</dbReference>
<dbReference type="InterPro" id="IPR001114">
    <property type="entry name" value="Adenylosuccinate_synthetase"/>
</dbReference>
<dbReference type="InterPro" id="IPR027417">
    <property type="entry name" value="P-loop_NTPase"/>
</dbReference>
<dbReference type="NCBIfam" id="NF002223">
    <property type="entry name" value="PRK01117.1"/>
    <property type="match status" value="1"/>
</dbReference>
<dbReference type="NCBIfam" id="TIGR00184">
    <property type="entry name" value="purA"/>
    <property type="match status" value="1"/>
</dbReference>
<dbReference type="PANTHER" id="PTHR11846">
    <property type="entry name" value="ADENYLOSUCCINATE SYNTHETASE"/>
    <property type="match status" value="1"/>
</dbReference>
<dbReference type="PANTHER" id="PTHR11846:SF0">
    <property type="entry name" value="ADENYLOSUCCINATE SYNTHETASE"/>
    <property type="match status" value="1"/>
</dbReference>
<dbReference type="Pfam" id="PF00709">
    <property type="entry name" value="Adenylsucc_synt"/>
    <property type="match status" value="1"/>
</dbReference>
<dbReference type="SMART" id="SM00788">
    <property type="entry name" value="Adenylsucc_synt"/>
    <property type="match status" value="1"/>
</dbReference>
<dbReference type="SUPFAM" id="SSF52540">
    <property type="entry name" value="P-loop containing nucleoside triphosphate hydrolases"/>
    <property type="match status" value="1"/>
</dbReference>
<dbReference type="PROSITE" id="PS01266">
    <property type="entry name" value="ADENYLOSUCCIN_SYN_1"/>
    <property type="match status" value="1"/>
</dbReference>
<dbReference type="PROSITE" id="PS00513">
    <property type="entry name" value="ADENYLOSUCCIN_SYN_2"/>
    <property type="match status" value="1"/>
</dbReference>
<organism>
    <name type="scientific">Pseudarthrobacter chlorophenolicus (strain ATCC 700700 / DSM 12829 / CIP 107037 / JCM 12360 / KCTC 9906 / NCIMB 13794 / A6)</name>
    <name type="common">Arthrobacter chlorophenolicus</name>
    <dbReference type="NCBI Taxonomy" id="452863"/>
    <lineage>
        <taxon>Bacteria</taxon>
        <taxon>Bacillati</taxon>
        <taxon>Actinomycetota</taxon>
        <taxon>Actinomycetes</taxon>
        <taxon>Micrococcales</taxon>
        <taxon>Micrococcaceae</taxon>
        <taxon>Pseudarthrobacter</taxon>
    </lineage>
</organism>
<proteinExistence type="inferred from homology"/>
<accession>B8HBV4</accession>
<sequence>MPAIVIVGAQWGDEGKGKATDLLGGRVDYVVKPNGGNNAGHTVVVGGEKYELKLLPAGILSPNAVPIIGNGCVVNLEALFQEIDGLQARGADTSKLRVSANAHLVAPYHQVLDKVTERFLGKRAIGTTGRGIGPAYMDKVARLGIRVQDVFDESILRQKVEGSLHQKNEVLVKIYNRRSVVVDEIVEYFLSFAERLRPLVIDSTLVLNTALDEGKVVLMEGGQATFLDVDHGTYPFVTSSNPTAGGASVGSGIGPTRISRSIGIIKAYTTRVGAGPFPTELFDEMGVYLQKTGGEFGVNTGRPRRCGWYDAVLARHASRVNGFTDYFVTKLDVLTGIEQIPVCVAYDVDGVRHDEMPMTQTEFHHAKPIFEYFDGWTEDITGARTLADLPENARNYVLALEKLSGTRFSAIGVGPDRDQTIVVNDLIND</sequence>
<keyword id="KW-0963">Cytoplasm</keyword>
<keyword id="KW-0342">GTP-binding</keyword>
<keyword id="KW-0436">Ligase</keyword>
<keyword id="KW-0460">Magnesium</keyword>
<keyword id="KW-0479">Metal-binding</keyword>
<keyword id="KW-0547">Nucleotide-binding</keyword>
<keyword id="KW-0658">Purine biosynthesis</keyword>
<evidence type="ECO:0000255" key="1">
    <source>
        <dbReference type="HAMAP-Rule" id="MF_00011"/>
    </source>
</evidence>
<feature type="chain" id="PRO_1000116451" description="Adenylosuccinate synthetase">
    <location>
        <begin position="1"/>
        <end position="429"/>
    </location>
</feature>
<feature type="active site" description="Proton acceptor" evidence="1">
    <location>
        <position position="13"/>
    </location>
</feature>
<feature type="active site" description="Proton donor" evidence="1">
    <location>
        <position position="41"/>
    </location>
</feature>
<feature type="binding site" evidence="1">
    <location>
        <begin position="12"/>
        <end position="18"/>
    </location>
    <ligand>
        <name>GTP</name>
        <dbReference type="ChEBI" id="CHEBI:37565"/>
    </ligand>
</feature>
<feature type="binding site" description="in other chain" evidence="1">
    <location>
        <begin position="13"/>
        <end position="16"/>
    </location>
    <ligand>
        <name>IMP</name>
        <dbReference type="ChEBI" id="CHEBI:58053"/>
        <note>ligand shared between dimeric partners</note>
    </ligand>
</feature>
<feature type="binding site" evidence="1">
    <location>
        <position position="13"/>
    </location>
    <ligand>
        <name>Mg(2+)</name>
        <dbReference type="ChEBI" id="CHEBI:18420"/>
    </ligand>
</feature>
<feature type="binding site" description="in other chain" evidence="1">
    <location>
        <begin position="38"/>
        <end position="41"/>
    </location>
    <ligand>
        <name>IMP</name>
        <dbReference type="ChEBI" id="CHEBI:58053"/>
        <note>ligand shared between dimeric partners</note>
    </ligand>
</feature>
<feature type="binding site" evidence="1">
    <location>
        <begin position="40"/>
        <end position="42"/>
    </location>
    <ligand>
        <name>GTP</name>
        <dbReference type="ChEBI" id="CHEBI:37565"/>
    </ligand>
</feature>
<feature type="binding site" evidence="1">
    <location>
        <position position="40"/>
    </location>
    <ligand>
        <name>Mg(2+)</name>
        <dbReference type="ChEBI" id="CHEBI:18420"/>
    </ligand>
</feature>
<feature type="binding site" description="in other chain" evidence="1">
    <location>
        <position position="128"/>
    </location>
    <ligand>
        <name>IMP</name>
        <dbReference type="ChEBI" id="CHEBI:58053"/>
        <note>ligand shared between dimeric partners</note>
    </ligand>
</feature>
<feature type="binding site" evidence="1">
    <location>
        <position position="142"/>
    </location>
    <ligand>
        <name>IMP</name>
        <dbReference type="ChEBI" id="CHEBI:58053"/>
        <note>ligand shared between dimeric partners</note>
    </ligand>
</feature>
<feature type="binding site" description="in other chain" evidence="1">
    <location>
        <position position="223"/>
    </location>
    <ligand>
        <name>IMP</name>
        <dbReference type="ChEBI" id="CHEBI:58053"/>
        <note>ligand shared between dimeric partners</note>
    </ligand>
</feature>
<feature type="binding site" description="in other chain" evidence="1">
    <location>
        <position position="238"/>
    </location>
    <ligand>
        <name>IMP</name>
        <dbReference type="ChEBI" id="CHEBI:58053"/>
        <note>ligand shared between dimeric partners</note>
    </ligand>
</feature>
<feature type="binding site" evidence="1">
    <location>
        <begin position="298"/>
        <end position="304"/>
    </location>
    <ligand>
        <name>substrate</name>
    </ligand>
</feature>
<feature type="binding site" description="in other chain" evidence="1">
    <location>
        <position position="302"/>
    </location>
    <ligand>
        <name>IMP</name>
        <dbReference type="ChEBI" id="CHEBI:58053"/>
        <note>ligand shared between dimeric partners</note>
    </ligand>
</feature>
<feature type="binding site" evidence="1">
    <location>
        <position position="304"/>
    </location>
    <ligand>
        <name>GTP</name>
        <dbReference type="ChEBI" id="CHEBI:37565"/>
    </ligand>
</feature>
<feature type="binding site" evidence="1">
    <location>
        <begin position="330"/>
        <end position="332"/>
    </location>
    <ligand>
        <name>GTP</name>
        <dbReference type="ChEBI" id="CHEBI:37565"/>
    </ligand>
</feature>
<feature type="binding site" evidence="1">
    <location>
        <begin position="412"/>
        <end position="414"/>
    </location>
    <ligand>
        <name>GTP</name>
        <dbReference type="ChEBI" id="CHEBI:37565"/>
    </ligand>
</feature>
<name>PURA_PSECP</name>
<gene>
    <name evidence="1" type="primary">purA</name>
    <name type="ordered locus">Achl_0667</name>
</gene>
<reference key="1">
    <citation type="submission" date="2009-01" db="EMBL/GenBank/DDBJ databases">
        <title>Complete sequence of chromosome of Arthrobacter chlorophenolicus A6.</title>
        <authorList>
            <consortium name="US DOE Joint Genome Institute"/>
            <person name="Lucas S."/>
            <person name="Copeland A."/>
            <person name="Lapidus A."/>
            <person name="Glavina del Rio T."/>
            <person name="Tice H."/>
            <person name="Bruce D."/>
            <person name="Goodwin L."/>
            <person name="Pitluck S."/>
            <person name="Goltsman E."/>
            <person name="Clum A."/>
            <person name="Larimer F."/>
            <person name="Land M."/>
            <person name="Hauser L."/>
            <person name="Kyrpides N."/>
            <person name="Mikhailova N."/>
            <person name="Jansson J."/>
            <person name="Richardson P."/>
        </authorList>
    </citation>
    <scope>NUCLEOTIDE SEQUENCE [LARGE SCALE GENOMIC DNA]</scope>
    <source>
        <strain>ATCC 700700 / DSM 12829 / CIP 107037 / JCM 12360 / KCTC 9906 / NCIMB 13794 / A6</strain>
    </source>
</reference>